<evidence type="ECO:0000255" key="1"/>
<evidence type="ECO:0000305" key="2"/>
<protein>
    <recommendedName>
        <fullName>Uncharacterized protein MT2136</fullName>
    </recommendedName>
</protein>
<gene>
    <name type="ordered locus">MT2136</name>
</gene>
<reference key="1">
    <citation type="journal article" date="2002" name="J. Bacteriol.">
        <title>Whole-genome comparison of Mycobacterium tuberculosis clinical and laboratory strains.</title>
        <authorList>
            <person name="Fleischmann R.D."/>
            <person name="Alland D."/>
            <person name="Eisen J.A."/>
            <person name="Carpenter L."/>
            <person name="White O."/>
            <person name="Peterson J.D."/>
            <person name="DeBoy R.T."/>
            <person name="Dodson R.J."/>
            <person name="Gwinn M.L."/>
            <person name="Haft D.H."/>
            <person name="Hickey E.K."/>
            <person name="Kolonay J.F."/>
            <person name="Nelson W.C."/>
            <person name="Umayam L.A."/>
            <person name="Ermolaeva M.D."/>
            <person name="Salzberg S.L."/>
            <person name="Delcher A."/>
            <person name="Utterback T.R."/>
            <person name="Weidman J.F."/>
            <person name="Khouri H.M."/>
            <person name="Gill J."/>
            <person name="Mikula A."/>
            <person name="Bishai W."/>
            <person name="Jacobs W.R. Jr."/>
            <person name="Venter J.C."/>
            <person name="Fraser C.M."/>
        </authorList>
    </citation>
    <scope>NUCLEOTIDE SEQUENCE [LARGE SCALE GENOMIC DNA]</scope>
    <source>
        <strain>CDC 1551 / Oshkosh</strain>
    </source>
</reference>
<feature type="chain" id="PRO_0000427459" description="Uncharacterized protein MT2136">
    <location>
        <begin position="1"/>
        <end position="83"/>
    </location>
</feature>
<feature type="transmembrane region" description="Helical" evidence="1">
    <location>
        <begin position="23"/>
        <end position="43"/>
    </location>
</feature>
<feature type="transmembrane region" description="Helical" evidence="1">
    <location>
        <begin position="49"/>
        <end position="69"/>
    </location>
</feature>
<comment type="subcellular location">
    <subcellularLocation>
        <location evidence="2">Cell membrane</location>
        <topology evidence="2">Multi-pass membrane protein</topology>
    </subcellularLocation>
</comment>
<comment type="sequence caution" evidence="2">
    <conflict type="erroneous initiation">
        <sequence resource="EMBL-CDS" id="AAK46416"/>
    </conflict>
</comment>
<dbReference type="EMBL" id="AE000516">
    <property type="protein sequence ID" value="AAK46416.1"/>
    <property type="status" value="ALT_INIT"/>
    <property type="molecule type" value="Genomic_DNA"/>
</dbReference>
<dbReference type="PIR" id="G70765">
    <property type="entry name" value="G70765"/>
</dbReference>
<dbReference type="KEGG" id="mtc:MT2136"/>
<dbReference type="PATRIC" id="fig|83331.31.peg.2304"/>
<dbReference type="HOGENOM" id="CLU_2539005_0_0_11"/>
<dbReference type="Proteomes" id="UP000001020">
    <property type="component" value="Chromosome"/>
</dbReference>
<dbReference type="GO" id="GO:0005886">
    <property type="term" value="C:plasma membrane"/>
    <property type="evidence" value="ECO:0007669"/>
    <property type="project" value="UniProtKB-SubCell"/>
</dbReference>
<name>Y2076_MYCTO</name>
<keyword id="KW-1003">Cell membrane</keyword>
<keyword id="KW-0472">Membrane</keyword>
<keyword id="KW-1185">Reference proteome</keyword>
<keyword id="KW-0812">Transmembrane</keyword>
<keyword id="KW-1133">Transmembrane helix</keyword>
<accession>P9WLL2</accession>
<accession>L0TBA0</accession>
<accession>P64931</accession>
<accession>Q10684</accession>
<sequence>MVVCLIGGVAGSLWPRPAGRLRGGCYFAFMGVAWVLLAISAIANAVKGSLWWDIWSLGLLVLIPAVVYGKMRRSRRISSDQDR</sequence>
<proteinExistence type="predicted"/>
<organism>
    <name type="scientific">Mycobacterium tuberculosis (strain CDC 1551 / Oshkosh)</name>
    <dbReference type="NCBI Taxonomy" id="83331"/>
    <lineage>
        <taxon>Bacteria</taxon>
        <taxon>Bacillati</taxon>
        <taxon>Actinomycetota</taxon>
        <taxon>Actinomycetes</taxon>
        <taxon>Mycobacteriales</taxon>
        <taxon>Mycobacteriaceae</taxon>
        <taxon>Mycobacterium</taxon>
        <taxon>Mycobacterium tuberculosis complex</taxon>
    </lineage>
</organism>